<sequence>MIYPKIALAQSIIEICSAKGIYNIIISPGSRNAPLTIGFAQNPNFKCYSIADERCAAFFALGIAQQTQKPAAVVCTSGSALLNYYPAVAEAFYSQIPLIVISADRPQSKIDIGDGQTIRQENVFLNHSVFNANLTEDASVENDLKINKAIETAILQKGPVHINAPFEEPLYQTVSELSVEPKITNLEEFLETKIIENEDEIVSIWNSSKRKLILIGGINEANSIDDAVLENFAKDPSIVVLTETTSNLHHPSFINSIDSLITPFDDSDFKELEPEVLITFGGMIVSKRIKAFLRKYKPVHHWHIDTLRAYDTFNALSKHFVMEPNDFFKNLLPKTEFVTSKYFSKIDKIYDLRKIKKKQYLSKIGFSDFKVFEKVIESLPKNSQLQISNSSAIRYAQLIEIDPSIEVFCNRGTSGIDGSTSTAVGAAVGSGKPNVFITGDISFLYDSNALWNSYIPKNFKIILINNGGGGIFRILPGHQEKPVFNTYFETSHHLTAEHLAKMYQCSYFKADDLSSLNENLELLYNSNEAPGILEVFTPTFENDVILKQYFKELT</sequence>
<comment type="function">
    <text evidence="1">Catalyzes the thiamine diphosphate-dependent decarboxylation of 2-oxoglutarate and the subsequent addition of the resulting succinic semialdehyde-thiamine pyrophosphate anion to isochorismate to yield 2-succinyl-5-enolpyruvyl-6-hydroxy-3-cyclohexene-1-carboxylate (SEPHCHC).</text>
</comment>
<comment type="catalytic activity">
    <reaction evidence="1">
        <text>isochorismate + 2-oxoglutarate + H(+) = 5-enolpyruvoyl-6-hydroxy-2-succinyl-cyclohex-3-ene-1-carboxylate + CO2</text>
        <dbReference type="Rhea" id="RHEA:25593"/>
        <dbReference type="ChEBI" id="CHEBI:15378"/>
        <dbReference type="ChEBI" id="CHEBI:16526"/>
        <dbReference type="ChEBI" id="CHEBI:16810"/>
        <dbReference type="ChEBI" id="CHEBI:29780"/>
        <dbReference type="ChEBI" id="CHEBI:58818"/>
        <dbReference type="EC" id="2.2.1.9"/>
    </reaction>
</comment>
<comment type="cofactor">
    <cofactor evidence="1">
        <name>Mg(2+)</name>
        <dbReference type="ChEBI" id="CHEBI:18420"/>
    </cofactor>
    <cofactor evidence="1">
        <name>Mn(2+)</name>
        <dbReference type="ChEBI" id="CHEBI:29035"/>
    </cofactor>
</comment>
<comment type="cofactor">
    <cofactor evidence="1">
        <name>thiamine diphosphate</name>
        <dbReference type="ChEBI" id="CHEBI:58937"/>
    </cofactor>
    <text evidence="1">Binds 1 thiamine pyrophosphate per subunit.</text>
</comment>
<comment type="pathway">
    <text evidence="1">Quinol/quinone metabolism; 1,4-dihydroxy-2-naphthoate biosynthesis; 1,4-dihydroxy-2-naphthoate from chorismate: step 2/7.</text>
</comment>
<comment type="pathway">
    <text evidence="1">Quinol/quinone metabolism; menaquinone biosynthesis.</text>
</comment>
<comment type="subunit">
    <text evidence="1">Homodimer.</text>
</comment>
<comment type="similarity">
    <text evidence="1">Belongs to the TPP enzyme family. MenD subfamily.</text>
</comment>
<evidence type="ECO:0000255" key="1">
    <source>
        <dbReference type="HAMAP-Rule" id="MF_01659"/>
    </source>
</evidence>
<keyword id="KW-0460">Magnesium</keyword>
<keyword id="KW-0464">Manganese</keyword>
<keyword id="KW-0474">Menaquinone biosynthesis</keyword>
<keyword id="KW-0479">Metal-binding</keyword>
<keyword id="KW-0786">Thiamine pyrophosphate</keyword>
<keyword id="KW-0808">Transferase</keyword>
<organism>
    <name type="scientific">Flavobacterium johnsoniae (strain ATCC 17061 / DSM 2064 / JCM 8514 / BCRC 14874 / CCUG 350202 / NBRC 14942 / NCIMB 11054 / UW101)</name>
    <name type="common">Cytophaga johnsonae</name>
    <dbReference type="NCBI Taxonomy" id="376686"/>
    <lineage>
        <taxon>Bacteria</taxon>
        <taxon>Pseudomonadati</taxon>
        <taxon>Bacteroidota</taxon>
        <taxon>Flavobacteriia</taxon>
        <taxon>Flavobacteriales</taxon>
        <taxon>Flavobacteriaceae</taxon>
        <taxon>Flavobacterium</taxon>
    </lineage>
</organism>
<dbReference type="EC" id="2.2.1.9" evidence="1"/>
<dbReference type="EMBL" id="CP000685">
    <property type="protein sequence ID" value="ABQ05803.1"/>
    <property type="molecule type" value="Genomic_DNA"/>
</dbReference>
<dbReference type="RefSeq" id="WP_012024842.1">
    <property type="nucleotide sequence ID" value="NC_009441.1"/>
</dbReference>
<dbReference type="SMR" id="A5FG67"/>
<dbReference type="STRING" id="376686.Fjoh_2781"/>
<dbReference type="KEGG" id="fjo:Fjoh_2781"/>
<dbReference type="eggNOG" id="COG1165">
    <property type="taxonomic scope" value="Bacteria"/>
</dbReference>
<dbReference type="HOGENOM" id="CLU_006051_3_0_10"/>
<dbReference type="OrthoDB" id="9791859at2"/>
<dbReference type="UniPathway" id="UPA00079"/>
<dbReference type="UniPathway" id="UPA01057">
    <property type="reaction ID" value="UER00164"/>
</dbReference>
<dbReference type="Proteomes" id="UP000006694">
    <property type="component" value="Chromosome"/>
</dbReference>
<dbReference type="GO" id="GO:0070204">
    <property type="term" value="F:2-succinyl-5-enolpyruvyl-6-hydroxy-3-cyclohexene-1-carboxylic-acid synthase activity"/>
    <property type="evidence" value="ECO:0007669"/>
    <property type="project" value="UniProtKB-UniRule"/>
</dbReference>
<dbReference type="GO" id="GO:0000287">
    <property type="term" value="F:magnesium ion binding"/>
    <property type="evidence" value="ECO:0007669"/>
    <property type="project" value="UniProtKB-UniRule"/>
</dbReference>
<dbReference type="GO" id="GO:0030145">
    <property type="term" value="F:manganese ion binding"/>
    <property type="evidence" value="ECO:0007669"/>
    <property type="project" value="UniProtKB-UniRule"/>
</dbReference>
<dbReference type="GO" id="GO:0030976">
    <property type="term" value="F:thiamine pyrophosphate binding"/>
    <property type="evidence" value="ECO:0007669"/>
    <property type="project" value="UniProtKB-UniRule"/>
</dbReference>
<dbReference type="GO" id="GO:0009234">
    <property type="term" value="P:menaquinone biosynthetic process"/>
    <property type="evidence" value="ECO:0007669"/>
    <property type="project" value="UniProtKB-UniRule"/>
</dbReference>
<dbReference type="CDD" id="cd07037">
    <property type="entry name" value="TPP_PYR_MenD"/>
    <property type="match status" value="1"/>
</dbReference>
<dbReference type="CDD" id="cd02009">
    <property type="entry name" value="TPP_SHCHC_synthase"/>
    <property type="match status" value="1"/>
</dbReference>
<dbReference type="Gene3D" id="3.40.50.970">
    <property type="match status" value="2"/>
</dbReference>
<dbReference type="Gene3D" id="3.40.50.1220">
    <property type="entry name" value="TPP-binding domain"/>
    <property type="match status" value="1"/>
</dbReference>
<dbReference type="HAMAP" id="MF_01659">
    <property type="entry name" value="MenD"/>
    <property type="match status" value="1"/>
</dbReference>
<dbReference type="InterPro" id="IPR004433">
    <property type="entry name" value="MenaQ_synth_MenD"/>
</dbReference>
<dbReference type="InterPro" id="IPR032264">
    <property type="entry name" value="MenD_middle"/>
</dbReference>
<dbReference type="InterPro" id="IPR029061">
    <property type="entry name" value="THDP-binding"/>
</dbReference>
<dbReference type="InterPro" id="IPR012001">
    <property type="entry name" value="Thiamin_PyroP_enz_TPP-bd_dom"/>
</dbReference>
<dbReference type="InterPro" id="IPR011766">
    <property type="entry name" value="TPP_enzyme_TPP-bd"/>
</dbReference>
<dbReference type="NCBIfam" id="TIGR00173">
    <property type="entry name" value="menD"/>
    <property type="match status" value="1"/>
</dbReference>
<dbReference type="PANTHER" id="PTHR42916">
    <property type="entry name" value="2-SUCCINYL-5-ENOLPYRUVYL-6-HYDROXY-3-CYCLOHEXENE-1-CARBOXYLATE SYNTHASE"/>
    <property type="match status" value="1"/>
</dbReference>
<dbReference type="PANTHER" id="PTHR42916:SF1">
    <property type="entry name" value="PROTEIN PHYLLO, CHLOROPLASTIC"/>
    <property type="match status" value="1"/>
</dbReference>
<dbReference type="Pfam" id="PF02775">
    <property type="entry name" value="TPP_enzyme_C"/>
    <property type="match status" value="1"/>
</dbReference>
<dbReference type="Pfam" id="PF16582">
    <property type="entry name" value="TPP_enzyme_M_2"/>
    <property type="match status" value="1"/>
</dbReference>
<dbReference type="Pfam" id="PF02776">
    <property type="entry name" value="TPP_enzyme_N"/>
    <property type="match status" value="1"/>
</dbReference>
<dbReference type="PIRSF" id="PIRSF004983">
    <property type="entry name" value="MenD"/>
    <property type="match status" value="1"/>
</dbReference>
<dbReference type="SUPFAM" id="SSF52518">
    <property type="entry name" value="Thiamin diphosphate-binding fold (THDP-binding)"/>
    <property type="match status" value="2"/>
</dbReference>
<proteinExistence type="inferred from homology"/>
<accession>A5FG67</accession>
<name>MEND_FLAJ1</name>
<protein>
    <recommendedName>
        <fullName evidence="1">2-succinyl-5-enolpyruvyl-6-hydroxy-3-cyclohexene-1-carboxylate synthase</fullName>
        <shortName evidence="1">SEPHCHC synthase</shortName>
        <ecNumber evidence="1">2.2.1.9</ecNumber>
    </recommendedName>
    <alternativeName>
        <fullName evidence="1">Menaquinone biosynthesis protein MenD</fullName>
    </alternativeName>
</protein>
<reference key="1">
    <citation type="journal article" date="2009" name="Appl. Environ. Microbiol.">
        <title>Novel features of the polysaccharide-digesting gliding bacterium Flavobacterium johnsoniae as revealed by genome sequence analysis.</title>
        <authorList>
            <person name="McBride M.J."/>
            <person name="Xie G."/>
            <person name="Martens E.C."/>
            <person name="Lapidus A."/>
            <person name="Henrissat B."/>
            <person name="Rhodes R.G."/>
            <person name="Goltsman E."/>
            <person name="Wang W."/>
            <person name="Xu J."/>
            <person name="Hunnicutt D.W."/>
            <person name="Staroscik A.M."/>
            <person name="Hoover T.R."/>
            <person name="Cheng Y.Q."/>
            <person name="Stein J.L."/>
        </authorList>
    </citation>
    <scope>NUCLEOTIDE SEQUENCE [LARGE SCALE GENOMIC DNA]</scope>
    <source>
        <strain>ATCC 17061 / DSM 2064 / JCM 8514 / BCRC 14874 / CCUG 350202 / NBRC 14942 / NCIMB 11054 / UW101</strain>
    </source>
</reference>
<feature type="chain" id="PRO_0000341747" description="2-succinyl-5-enolpyruvyl-6-hydroxy-3-cyclohexene-1-carboxylate synthase">
    <location>
        <begin position="1"/>
        <end position="554"/>
    </location>
</feature>
<gene>
    <name evidence="1" type="primary">menD</name>
    <name type="ordered locus">Fjoh_2781</name>
</gene>